<keyword id="KW-0113">Calvin cycle</keyword>
<keyword id="KW-0120">Carbon dioxide fixation</keyword>
<keyword id="KW-0150">Chloroplast</keyword>
<keyword id="KW-1015">Disulfide bond</keyword>
<keyword id="KW-0456">Lyase</keyword>
<keyword id="KW-0460">Magnesium</keyword>
<keyword id="KW-0479">Metal-binding</keyword>
<keyword id="KW-0488">Methylation</keyword>
<keyword id="KW-0503">Monooxygenase</keyword>
<keyword id="KW-0560">Oxidoreductase</keyword>
<keyword id="KW-0601">Photorespiration</keyword>
<keyword id="KW-0602">Photosynthesis</keyword>
<keyword id="KW-0934">Plastid</keyword>
<reference key="1">
    <citation type="journal article" date="1992" name="Science">
        <title>Carnivorous plants: phylogeny and structural evolution.</title>
        <authorList>
            <person name="Albert V.A."/>
            <person name="Williams S.E."/>
            <person name="Chase M.W."/>
        </authorList>
    </citation>
    <scope>NUCLEOTIDE SEQUENCE [GENOMIC DNA]</scope>
</reference>
<proteinExistence type="inferred from homology"/>
<name>RBL_TROAR</name>
<organism>
    <name type="scientific">Trochodendron aralioides</name>
    <name type="common">Wheel tree</name>
    <dbReference type="NCBI Taxonomy" id="4407"/>
    <lineage>
        <taxon>Eukaryota</taxon>
        <taxon>Viridiplantae</taxon>
        <taxon>Streptophyta</taxon>
        <taxon>Embryophyta</taxon>
        <taxon>Tracheophyta</taxon>
        <taxon>Spermatophyta</taxon>
        <taxon>Magnoliopsida</taxon>
        <taxon>Trochodendrales</taxon>
        <taxon>Trochodendraceae</taxon>
        <taxon>Trochodendron</taxon>
    </lineage>
</organism>
<dbReference type="EC" id="4.1.1.39" evidence="1"/>
<dbReference type="EMBL" id="L01958">
    <property type="protein sequence ID" value="AAA84695.2"/>
    <property type="molecule type" value="Genomic_DNA"/>
</dbReference>
<dbReference type="SMR" id="P28458"/>
<dbReference type="GO" id="GO:0009507">
    <property type="term" value="C:chloroplast"/>
    <property type="evidence" value="ECO:0007669"/>
    <property type="project" value="UniProtKB-SubCell"/>
</dbReference>
<dbReference type="GO" id="GO:0000287">
    <property type="term" value="F:magnesium ion binding"/>
    <property type="evidence" value="ECO:0007669"/>
    <property type="project" value="InterPro"/>
</dbReference>
<dbReference type="GO" id="GO:0004497">
    <property type="term" value="F:monooxygenase activity"/>
    <property type="evidence" value="ECO:0007669"/>
    <property type="project" value="UniProtKB-KW"/>
</dbReference>
<dbReference type="GO" id="GO:0016984">
    <property type="term" value="F:ribulose-bisphosphate carboxylase activity"/>
    <property type="evidence" value="ECO:0007669"/>
    <property type="project" value="UniProtKB-EC"/>
</dbReference>
<dbReference type="GO" id="GO:0009853">
    <property type="term" value="P:photorespiration"/>
    <property type="evidence" value="ECO:0007669"/>
    <property type="project" value="UniProtKB-KW"/>
</dbReference>
<dbReference type="GO" id="GO:0019253">
    <property type="term" value="P:reductive pentose-phosphate cycle"/>
    <property type="evidence" value="ECO:0007669"/>
    <property type="project" value="UniProtKB-KW"/>
</dbReference>
<dbReference type="CDD" id="cd08212">
    <property type="entry name" value="RuBisCO_large_I"/>
    <property type="match status" value="1"/>
</dbReference>
<dbReference type="FunFam" id="3.20.20.110:FF:000001">
    <property type="entry name" value="Ribulose bisphosphate carboxylase large chain"/>
    <property type="match status" value="1"/>
</dbReference>
<dbReference type="FunFam" id="3.30.70.150:FF:000001">
    <property type="entry name" value="Ribulose bisphosphate carboxylase large chain"/>
    <property type="match status" value="1"/>
</dbReference>
<dbReference type="Gene3D" id="3.20.20.110">
    <property type="entry name" value="Ribulose bisphosphate carboxylase, large subunit, C-terminal domain"/>
    <property type="match status" value="1"/>
</dbReference>
<dbReference type="Gene3D" id="3.30.70.150">
    <property type="entry name" value="RuBisCO large subunit, N-terminal domain"/>
    <property type="match status" value="1"/>
</dbReference>
<dbReference type="HAMAP" id="MF_01338">
    <property type="entry name" value="RuBisCO_L_type1"/>
    <property type="match status" value="1"/>
</dbReference>
<dbReference type="InterPro" id="IPR033966">
    <property type="entry name" value="RuBisCO"/>
</dbReference>
<dbReference type="InterPro" id="IPR020878">
    <property type="entry name" value="RuBisCo_large_chain_AS"/>
</dbReference>
<dbReference type="InterPro" id="IPR000685">
    <property type="entry name" value="RuBisCO_lsu_C"/>
</dbReference>
<dbReference type="InterPro" id="IPR036376">
    <property type="entry name" value="RuBisCO_lsu_C_sf"/>
</dbReference>
<dbReference type="InterPro" id="IPR017443">
    <property type="entry name" value="RuBisCO_lsu_fd_N"/>
</dbReference>
<dbReference type="InterPro" id="IPR036422">
    <property type="entry name" value="RuBisCO_lsu_N_sf"/>
</dbReference>
<dbReference type="InterPro" id="IPR020888">
    <property type="entry name" value="RuBisCO_lsuI"/>
</dbReference>
<dbReference type="NCBIfam" id="NF003252">
    <property type="entry name" value="PRK04208.1"/>
    <property type="match status" value="1"/>
</dbReference>
<dbReference type="PANTHER" id="PTHR42704">
    <property type="entry name" value="RIBULOSE BISPHOSPHATE CARBOXYLASE"/>
    <property type="match status" value="1"/>
</dbReference>
<dbReference type="PANTHER" id="PTHR42704:SF16">
    <property type="entry name" value="RIBULOSE BISPHOSPHATE CARBOXYLASE LARGE CHAIN"/>
    <property type="match status" value="1"/>
</dbReference>
<dbReference type="Pfam" id="PF00016">
    <property type="entry name" value="RuBisCO_large"/>
    <property type="match status" value="1"/>
</dbReference>
<dbReference type="Pfam" id="PF02788">
    <property type="entry name" value="RuBisCO_large_N"/>
    <property type="match status" value="1"/>
</dbReference>
<dbReference type="SFLD" id="SFLDG01052">
    <property type="entry name" value="RuBisCO"/>
    <property type="match status" value="1"/>
</dbReference>
<dbReference type="SFLD" id="SFLDS00014">
    <property type="entry name" value="RuBisCO"/>
    <property type="match status" value="1"/>
</dbReference>
<dbReference type="SFLD" id="SFLDG00301">
    <property type="entry name" value="RuBisCO-like_proteins"/>
    <property type="match status" value="1"/>
</dbReference>
<dbReference type="SUPFAM" id="SSF51649">
    <property type="entry name" value="RuBisCo, C-terminal domain"/>
    <property type="match status" value="1"/>
</dbReference>
<dbReference type="SUPFAM" id="SSF54966">
    <property type="entry name" value="RuBisCO, large subunit, small (N-terminal) domain"/>
    <property type="match status" value="1"/>
</dbReference>
<dbReference type="PROSITE" id="PS00157">
    <property type="entry name" value="RUBISCO_LARGE"/>
    <property type="match status" value="1"/>
</dbReference>
<geneLocation type="chloroplast"/>
<accession>P28458</accession>
<sequence>VGFKAGVKDYKLTYYTPEYKTKDTDILAAFRVTPQPGVPPEEAGAAVAAESSTGTWTTVWTDGLTSLDRYKGRCYHIETVTGEENQFIVYVAYPLDLFEEGSVTNMFTSIVGDVFGFKALRALRLEDLRIPPAYSKTFQGPPHGIQVERDKLNKYGRPLLGCTIKPKLGLSAKNYGRAVYECLRGGLDFTKDDENVNSQPFMRWRDRFLFCAEALYKAQAETGEIKGHYLNATAGTCEEMIKRAVFARELGVPIVMHDYLTGGFTANTTLSYYCRDNGLLLHIHRAMHAVIDRQKNHGIHFRVLAKALRMSGGDHIHSGIVVGKLEGERDITLGFVDLLRDDLVEEDRSRGIYFTQDWVSLPGVLPVASGGIHVWHMPALTEIFGDDSVLQFGGGTLGHPWGNAPGAVANRVALEACVQARNEGRDLAREGNEIIREASKWSPELAAACEVWKEIKFEFEAMDTL</sequence>
<feature type="chain" id="PRO_0000062606" description="Ribulose bisphosphate carboxylase large chain">
    <location>
        <begin position="1" status="less than"/>
        <end position="465"/>
    </location>
</feature>
<feature type="active site" description="Proton acceptor" evidence="1">
    <location>
        <position position="165"/>
    </location>
</feature>
<feature type="active site" description="Proton acceptor" evidence="1">
    <location>
        <position position="284"/>
    </location>
</feature>
<feature type="binding site" evidence="1">
    <location>
        <position position="163"/>
    </location>
    <ligand>
        <name>substrate</name>
    </ligand>
</feature>
<feature type="binding site" evidence="1">
    <location>
        <position position="167"/>
    </location>
    <ligand>
        <name>substrate</name>
    </ligand>
</feature>
<feature type="binding site" description="via carbamate group" evidence="1">
    <location>
        <position position="191"/>
    </location>
    <ligand>
        <name>Mg(2+)</name>
        <dbReference type="ChEBI" id="CHEBI:18420"/>
    </ligand>
</feature>
<feature type="binding site" evidence="1">
    <location>
        <position position="193"/>
    </location>
    <ligand>
        <name>Mg(2+)</name>
        <dbReference type="ChEBI" id="CHEBI:18420"/>
    </ligand>
</feature>
<feature type="binding site" evidence="1">
    <location>
        <position position="194"/>
    </location>
    <ligand>
        <name>Mg(2+)</name>
        <dbReference type="ChEBI" id="CHEBI:18420"/>
    </ligand>
</feature>
<feature type="binding site" evidence="1">
    <location>
        <position position="285"/>
    </location>
    <ligand>
        <name>substrate</name>
    </ligand>
</feature>
<feature type="binding site" evidence="1">
    <location>
        <position position="317"/>
    </location>
    <ligand>
        <name>substrate</name>
    </ligand>
</feature>
<feature type="binding site" evidence="1">
    <location>
        <position position="369"/>
    </location>
    <ligand>
        <name>substrate</name>
    </ligand>
</feature>
<feature type="site" description="Transition state stabilizer" evidence="1">
    <location>
        <position position="324"/>
    </location>
</feature>
<feature type="modified residue" description="N6,N6,N6-trimethyllysine" evidence="1">
    <location>
        <position position="4"/>
    </location>
</feature>
<feature type="modified residue" description="N6-carboxylysine" evidence="1">
    <location>
        <position position="191"/>
    </location>
</feature>
<feature type="disulfide bond" description="Interchain; in linked form" evidence="1">
    <location>
        <position position="237"/>
    </location>
</feature>
<feature type="non-terminal residue">
    <location>
        <position position="1"/>
    </location>
</feature>
<comment type="function">
    <text evidence="1">RuBisCO catalyzes two reactions: the carboxylation of D-ribulose 1,5-bisphosphate, the primary event in carbon dioxide fixation, as well as the oxidative fragmentation of the pentose substrate in the photorespiration process. Both reactions occur simultaneously and in competition at the same active site.</text>
</comment>
<comment type="catalytic activity">
    <reaction evidence="1">
        <text>2 (2R)-3-phosphoglycerate + 2 H(+) = D-ribulose 1,5-bisphosphate + CO2 + H2O</text>
        <dbReference type="Rhea" id="RHEA:23124"/>
        <dbReference type="ChEBI" id="CHEBI:15377"/>
        <dbReference type="ChEBI" id="CHEBI:15378"/>
        <dbReference type="ChEBI" id="CHEBI:16526"/>
        <dbReference type="ChEBI" id="CHEBI:57870"/>
        <dbReference type="ChEBI" id="CHEBI:58272"/>
        <dbReference type="EC" id="4.1.1.39"/>
    </reaction>
</comment>
<comment type="catalytic activity">
    <reaction evidence="1">
        <text>D-ribulose 1,5-bisphosphate + O2 = 2-phosphoglycolate + (2R)-3-phosphoglycerate + 2 H(+)</text>
        <dbReference type="Rhea" id="RHEA:36631"/>
        <dbReference type="ChEBI" id="CHEBI:15378"/>
        <dbReference type="ChEBI" id="CHEBI:15379"/>
        <dbReference type="ChEBI" id="CHEBI:57870"/>
        <dbReference type="ChEBI" id="CHEBI:58033"/>
        <dbReference type="ChEBI" id="CHEBI:58272"/>
    </reaction>
</comment>
<comment type="cofactor">
    <cofactor evidence="1">
        <name>Mg(2+)</name>
        <dbReference type="ChEBI" id="CHEBI:18420"/>
    </cofactor>
    <text evidence="1">Binds 1 Mg(2+) ion per subunit.</text>
</comment>
<comment type="subunit">
    <text evidence="1">Heterohexadecamer of 8 large chains and 8 small chains; disulfide-linked. The disulfide link is formed within the large subunit homodimers.</text>
</comment>
<comment type="subcellular location">
    <subcellularLocation>
        <location>Plastid</location>
        <location>Chloroplast</location>
    </subcellularLocation>
</comment>
<comment type="PTM">
    <text evidence="1">The disulfide bond which can form in the large chain dimeric partners within the hexadecamer appears to be associated with oxidative stress and protein turnover.</text>
</comment>
<comment type="miscellaneous">
    <text evidence="1">The basic functional RuBisCO is composed of a large chain homodimer in a 'head-to-tail' conformation. In form I RuBisCO this homodimer is arranged in a barrel-like tetramer with the small subunits forming a tetrameric 'cap' on each end of the 'barrel'.</text>
</comment>
<comment type="similarity">
    <text evidence="1">Belongs to the RuBisCO large chain family. Type I subfamily.</text>
</comment>
<evidence type="ECO:0000255" key="1">
    <source>
        <dbReference type="HAMAP-Rule" id="MF_01338"/>
    </source>
</evidence>
<protein>
    <recommendedName>
        <fullName evidence="1">Ribulose bisphosphate carboxylase large chain</fullName>
        <shortName evidence="1">RuBisCO large subunit</shortName>
        <ecNumber evidence="1">4.1.1.39</ecNumber>
    </recommendedName>
</protein>
<gene>
    <name evidence="1" type="primary">rbcL</name>
</gene>